<organism>
    <name type="scientific">Homo sapiens</name>
    <name type="common">Human</name>
    <dbReference type="NCBI Taxonomy" id="9606"/>
    <lineage>
        <taxon>Eukaryota</taxon>
        <taxon>Metazoa</taxon>
        <taxon>Chordata</taxon>
        <taxon>Craniata</taxon>
        <taxon>Vertebrata</taxon>
        <taxon>Euteleostomi</taxon>
        <taxon>Mammalia</taxon>
        <taxon>Eutheria</taxon>
        <taxon>Euarchontoglires</taxon>
        <taxon>Primates</taxon>
        <taxon>Haplorrhini</taxon>
        <taxon>Catarrhini</taxon>
        <taxon>Hominidae</taxon>
        <taxon>Homo</taxon>
    </lineage>
</organism>
<comment type="function">
    <text evidence="5 6">Responsible for the 2-O-phosphorylation of xylose in the glycosaminoglycan-protein linkage region of proteoglycans thereby regulating the amount of mature GAG chains. Sulfated glycosaminoglycans (GAGs), including heparan sulfate and chondroitin sulfate, are synthesized on the so-called common GAG-protein linkage region (GlcUAbeta1-3Galbeta1-3Galbeta1-4Xylbeta1-O-Ser) of core proteins, which is formed by the stepwise addition of monosaccharide residues by the respective specific glycosyltransferases. Xylose 2-O-phosphorylation may influence the catalytic activity of B3GAT3 (GlcAT-I) which completes the precursor tetrasaccharide of GAG-protein linkage regions on which the repeating disaccharide region is synthesized.</text>
</comment>
<comment type="catalytic activity">
    <reaction evidence="5">
        <text>3-O-(beta-D-galactosyl-(1-&gt;3)-beta-D-galactosyl-(1-&gt;4)-beta-D-xylosyl)-L-seryl-[protein] + ATP = 3-O-(beta-D-galactosyl-(1-&gt;3)-beta-D-galactosyl-(1-&gt;4)-beta-D-2-O-phosphoxylosyl)-L-seryl-[protein] + ADP + H(+)</text>
        <dbReference type="Rhea" id="RHEA:19461"/>
        <dbReference type="Rhea" id="RHEA-COMP:12571"/>
        <dbReference type="Rhea" id="RHEA-COMP:14558"/>
        <dbReference type="ChEBI" id="CHEBI:15378"/>
        <dbReference type="ChEBI" id="CHEBI:30616"/>
        <dbReference type="ChEBI" id="CHEBI:132090"/>
        <dbReference type="ChEBI" id="CHEBI:140494"/>
        <dbReference type="ChEBI" id="CHEBI:456216"/>
    </reaction>
</comment>
<comment type="cofactor">
    <cofactor evidence="2">
        <name>Mn(2+)</name>
        <dbReference type="ChEBI" id="CHEBI:29035"/>
    </cofactor>
</comment>
<comment type="interaction">
    <interactant intactId="EBI-11090967">
        <id>O75063</id>
    </interactant>
    <interactant intactId="EBI-21519158">
        <id>Q6ICH7</id>
        <label>ASPHD2</label>
    </interactant>
    <organismsDiffer>false</organismsDiffer>
    <experiments>2</experiments>
</comment>
<comment type="interaction">
    <interactant intactId="EBI-11090967">
        <id>O75063</id>
    </interactant>
    <interactant intactId="EBI-11532900">
        <id>J3KQ12</id>
        <label>BSCL2</label>
    </interactant>
    <organismsDiffer>false</organismsDiffer>
    <experiments>3</experiments>
</comment>
<comment type="interaction">
    <interactant intactId="EBI-11090967">
        <id>O75063</id>
    </interactant>
    <interactant intactId="EBI-9663608">
        <id>P07585</id>
        <label>DCN</label>
    </interactant>
    <organismsDiffer>false</organismsDiffer>
    <experiments>4</experiments>
</comment>
<comment type="interaction">
    <interactant intactId="EBI-11090967">
        <id>O75063</id>
    </interactant>
    <interactant intactId="EBI-18304435">
        <id>Q5JX71</id>
        <label>FAM209A</label>
    </interactant>
    <organismsDiffer>false</organismsDiffer>
    <experiments>3</experiments>
</comment>
<comment type="interaction">
    <interactant intactId="EBI-11090967">
        <id>O75063</id>
    </interactant>
    <interactant intactId="EBI-2833872">
        <id>O15552</id>
        <label>FFAR2</label>
    </interactant>
    <organismsDiffer>false</organismsDiffer>
    <experiments>3</experiments>
</comment>
<comment type="interaction">
    <interactant intactId="EBI-11090967">
        <id>O75063</id>
    </interactant>
    <interactant intactId="EBI-13345167">
        <id>Q8TDT2</id>
        <label>GPR152</label>
    </interactant>
    <organismsDiffer>false</organismsDiffer>
    <experiments>3</experiments>
</comment>
<comment type="interaction">
    <interactant intactId="EBI-11090967">
        <id>O75063</id>
    </interactant>
    <interactant intactId="EBI-12017638">
        <id>P48051</id>
        <label>KCNJ6</label>
    </interactant>
    <organismsDiffer>false</organismsDiffer>
    <experiments>3</experiments>
</comment>
<comment type="interaction">
    <interactant intactId="EBI-11090967">
        <id>O75063</id>
    </interactant>
    <interactant intactId="EBI-5235586">
        <id>Q8TBB6</id>
        <label>SLC7A14</label>
    </interactant>
    <organismsDiffer>false</organismsDiffer>
    <experiments>3</experiments>
</comment>
<comment type="interaction">
    <interactant intactId="EBI-11090967">
        <id>O75063</id>
    </interactant>
    <interactant intactId="EBI-6268651">
        <id>Q9NPL8</id>
        <label>TIMMDC1</label>
    </interactant>
    <organismsDiffer>false</organismsDiffer>
    <experiments>3</experiments>
</comment>
<comment type="interaction">
    <interactant intactId="EBI-11090967">
        <id>O75063</id>
    </interactant>
    <interactant intactId="EBI-11742770">
        <id>Q96HE8</id>
        <label>TMEM80</label>
    </interactant>
    <organismsDiffer>false</organismsDiffer>
    <experiments>3</experiments>
</comment>
<comment type="subcellular location">
    <subcellularLocation>
        <location evidence="5">Golgi apparatus membrane</location>
        <topology evidence="5">Single-pass type II membrane protein</topology>
    </subcellularLocation>
</comment>
<comment type="tissue specificity">
    <text evidence="4 6">Widely expressed. Strongly expressed in pancreas, spleen and fetal liver.</text>
</comment>
<comment type="similarity">
    <text evidence="8">Belongs to the FAM20 family.</text>
</comment>
<comment type="sequence caution" evidence="8">
    <conflict type="erroneous initiation">
        <sequence resource="EMBL-CDS" id="BAA32320"/>
    </conflict>
</comment>
<feature type="chain" id="PRO_0000008745" description="Glycosaminoglycan xylosylkinase">
    <location>
        <begin position="1"/>
        <end position="409"/>
    </location>
</feature>
<feature type="topological domain" description="Cytoplasmic" evidence="3">
    <location>
        <begin position="1"/>
        <end position="6"/>
    </location>
</feature>
<feature type="transmembrane region" description="Helical; Signal-anchor for type II membrane protein" evidence="3">
    <location>
        <begin position="7"/>
        <end position="25"/>
    </location>
</feature>
<feature type="topological domain" description="Lumenal" evidence="3">
    <location>
        <begin position="26"/>
        <end position="409"/>
    </location>
</feature>
<feature type="active site" evidence="1">
    <location>
        <position position="289"/>
    </location>
</feature>
<feature type="binding site" evidence="2">
    <location>
        <position position="107"/>
    </location>
    <ligand>
        <name>ATP</name>
        <dbReference type="ChEBI" id="CHEBI:30616"/>
    </ligand>
</feature>
<feature type="binding site" evidence="2">
    <location>
        <position position="123"/>
    </location>
    <ligand>
        <name>ATP</name>
        <dbReference type="ChEBI" id="CHEBI:30616"/>
    </ligand>
</feature>
<feature type="binding site" evidence="2">
    <location>
        <position position="142"/>
    </location>
    <ligand>
        <name>Mn(2+)</name>
        <dbReference type="ChEBI" id="CHEBI:29035"/>
    </ligand>
</feature>
<feature type="binding site" evidence="2">
    <location>
        <begin position="222"/>
        <end position="225"/>
    </location>
    <ligand>
        <name>ATP</name>
        <dbReference type="ChEBI" id="CHEBI:30616"/>
    </ligand>
</feature>
<feature type="binding site" evidence="2">
    <location>
        <position position="294"/>
    </location>
    <ligand>
        <name>ATP</name>
        <dbReference type="ChEBI" id="CHEBI:30616"/>
    </ligand>
</feature>
<feature type="binding site" evidence="2">
    <location>
        <position position="309"/>
    </location>
    <ligand>
        <name>ATP</name>
        <dbReference type="ChEBI" id="CHEBI:30616"/>
    </ligand>
</feature>
<feature type="binding site" evidence="2">
    <location>
        <position position="309"/>
    </location>
    <ligand>
        <name>Mn(2+)</name>
        <dbReference type="ChEBI" id="CHEBI:29035"/>
    </ligand>
</feature>
<feature type="glycosylation site" description="N-linked (GlcNAc...) asparagine" evidence="3">
    <location>
        <position position="193"/>
    </location>
</feature>
<feature type="disulfide bond" evidence="2">
    <location>
        <begin position="196"/>
        <end position="211"/>
    </location>
</feature>
<feature type="disulfide bond" evidence="2">
    <location>
        <begin position="201"/>
        <end position="204"/>
    </location>
</feature>
<feature type="disulfide bond" evidence="2">
    <location>
        <begin position="257"/>
        <end position="331"/>
    </location>
</feature>
<feature type="disulfide bond" evidence="2">
    <location>
        <begin position="332"/>
        <end position="389"/>
    </location>
</feature>
<sequence length="409" mass="46432">MKLKQRVVLLAILLVIFIFTKVFLIDNLDTSAANREDQRAFHRMMTGLRVELAPKLDHTLQSPWEIAAQWVVPREVYPEETPELGAVMHAMATKKIIKADVGYKGTQLKALLILEGGQKVVFKPKRYSRDHVVEGEPYAGYDRHNAEVAAFHLDRILGFHRAPLVVGRFVNLRTEIKPVATEQLLSTFLTVGNNTCFYGKCYYCRETEPACADGDIMEGSVTLWLPDVWPLQKHRHPWGRTYREGKLARWEYDESYCDAVKKTSPYDSGPRLLDIIDTAVFDYLIGNADRHHYESFQDDEGASMLILLDNAKSFGNPSLDERSILAPLYQCCIIRVSTWNRLNYLKNGVLKSALKSAMAHDPISPVLSDPHLDAVDQRLLSVLATVKQCTDQFGMDTVLVEDRMPLSHL</sequence>
<reference key="1">
    <citation type="journal article" date="2009" name="Biochem. J.">
        <title>FAM20B is a kinase that phosphorylates xylose in the glycosaminoglycan-protein linkage region.</title>
        <authorList>
            <person name="Koike T."/>
            <person name="Izumikawa T."/>
            <person name="Tamura J."/>
            <person name="Kitagawa H."/>
        </authorList>
    </citation>
    <scope>NUCLEOTIDE SEQUENCE [MRNA]</scope>
    <scope>SUBCELLULAR LOCATION</scope>
    <scope>CATALYTIC ACTIVITY</scope>
    <scope>FUNCTION</scope>
</reference>
<reference key="2">
    <citation type="journal article" date="1997" name="DNA Res.">
        <title>Characterization of cDNA clones in size-fractionated cDNA libraries from human brain.</title>
        <authorList>
            <person name="Seki N."/>
            <person name="Ohira M."/>
            <person name="Nagase T."/>
            <person name="Ishikawa K."/>
            <person name="Miyajima N."/>
            <person name="Nakajima D."/>
            <person name="Nomura N."/>
            <person name="Ohara O."/>
        </authorList>
    </citation>
    <scope>NUCLEOTIDE SEQUENCE [LARGE SCALE MRNA]</scope>
    <source>
        <tissue>Brain</tissue>
    </source>
</reference>
<reference key="3">
    <citation type="journal article" date="2004" name="Nat. Genet.">
        <title>Complete sequencing and characterization of 21,243 full-length human cDNAs.</title>
        <authorList>
            <person name="Ota T."/>
            <person name="Suzuki Y."/>
            <person name="Nishikawa T."/>
            <person name="Otsuki T."/>
            <person name="Sugiyama T."/>
            <person name="Irie R."/>
            <person name="Wakamatsu A."/>
            <person name="Hayashi K."/>
            <person name="Sato H."/>
            <person name="Nagai K."/>
            <person name="Kimura K."/>
            <person name="Makita H."/>
            <person name="Sekine M."/>
            <person name="Obayashi M."/>
            <person name="Nishi T."/>
            <person name="Shibahara T."/>
            <person name="Tanaka T."/>
            <person name="Ishii S."/>
            <person name="Yamamoto J."/>
            <person name="Saito K."/>
            <person name="Kawai Y."/>
            <person name="Isono Y."/>
            <person name="Nakamura Y."/>
            <person name="Nagahari K."/>
            <person name="Murakami K."/>
            <person name="Yasuda T."/>
            <person name="Iwayanagi T."/>
            <person name="Wagatsuma M."/>
            <person name="Shiratori A."/>
            <person name="Sudo H."/>
            <person name="Hosoiri T."/>
            <person name="Kaku Y."/>
            <person name="Kodaira H."/>
            <person name="Kondo H."/>
            <person name="Sugawara M."/>
            <person name="Takahashi M."/>
            <person name="Kanda K."/>
            <person name="Yokoi T."/>
            <person name="Furuya T."/>
            <person name="Kikkawa E."/>
            <person name="Omura Y."/>
            <person name="Abe K."/>
            <person name="Kamihara K."/>
            <person name="Katsuta N."/>
            <person name="Sato K."/>
            <person name="Tanikawa M."/>
            <person name="Yamazaki M."/>
            <person name="Ninomiya K."/>
            <person name="Ishibashi T."/>
            <person name="Yamashita H."/>
            <person name="Murakawa K."/>
            <person name="Fujimori K."/>
            <person name="Tanai H."/>
            <person name="Kimata M."/>
            <person name="Watanabe M."/>
            <person name="Hiraoka S."/>
            <person name="Chiba Y."/>
            <person name="Ishida S."/>
            <person name="Ono Y."/>
            <person name="Takiguchi S."/>
            <person name="Watanabe S."/>
            <person name="Yosida M."/>
            <person name="Hotuta T."/>
            <person name="Kusano J."/>
            <person name="Kanehori K."/>
            <person name="Takahashi-Fujii A."/>
            <person name="Hara H."/>
            <person name="Tanase T.-O."/>
            <person name="Nomura Y."/>
            <person name="Togiya S."/>
            <person name="Komai F."/>
            <person name="Hara R."/>
            <person name="Takeuchi K."/>
            <person name="Arita M."/>
            <person name="Imose N."/>
            <person name="Musashino K."/>
            <person name="Yuuki H."/>
            <person name="Oshima A."/>
            <person name="Sasaki N."/>
            <person name="Aotsuka S."/>
            <person name="Yoshikawa Y."/>
            <person name="Matsunawa H."/>
            <person name="Ichihara T."/>
            <person name="Shiohata N."/>
            <person name="Sano S."/>
            <person name="Moriya S."/>
            <person name="Momiyama H."/>
            <person name="Satoh N."/>
            <person name="Takami S."/>
            <person name="Terashima Y."/>
            <person name="Suzuki O."/>
            <person name="Nakagawa S."/>
            <person name="Senoh A."/>
            <person name="Mizoguchi H."/>
            <person name="Goto Y."/>
            <person name="Shimizu F."/>
            <person name="Wakebe H."/>
            <person name="Hishigaki H."/>
            <person name="Watanabe T."/>
            <person name="Sugiyama A."/>
            <person name="Takemoto M."/>
            <person name="Kawakami B."/>
            <person name="Yamazaki M."/>
            <person name="Watanabe K."/>
            <person name="Kumagai A."/>
            <person name="Itakura S."/>
            <person name="Fukuzumi Y."/>
            <person name="Fujimori Y."/>
            <person name="Komiyama M."/>
            <person name="Tashiro H."/>
            <person name="Tanigami A."/>
            <person name="Fujiwara T."/>
            <person name="Ono T."/>
            <person name="Yamada K."/>
            <person name="Fujii Y."/>
            <person name="Ozaki K."/>
            <person name="Hirao M."/>
            <person name="Ohmori Y."/>
            <person name="Kawabata A."/>
            <person name="Hikiji T."/>
            <person name="Kobatake N."/>
            <person name="Inagaki H."/>
            <person name="Ikema Y."/>
            <person name="Okamoto S."/>
            <person name="Okitani R."/>
            <person name="Kawakami T."/>
            <person name="Noguchi S."/>
            <person name="Itoh T."/>
            <person name="Shigeta K."/>
            <person name="Senba T."/>
            <person name="Matsumura K."/>
            <person name="Nakajima Y."/>
            <person name="Mizuno T."/>
            <person name="Morinaga M."/>
            <person name="Sasaki M."/>
            <person name="Togashi T."/>
            <person name="Oyama M."/>
            <person name="Hata H."/>
            <person name="Watanabe M."/>
            <person name="Komatsu T."/>
            <person name="Mizushima-Sugano J."/>
            <person name="Satoh T."/>
            <person name="Shirai Y."/>
            <person name="Takahashi Y."/>
            <person name="Nakagawa K."/>
            <person name="Okumura K."/>
            <person name="Nagase T."/>
            <person name="Nomura N."/>
            <person name="Kikuchi H."/>
            <person name="Masuho Y."/>
            <person name="Yamashita R."/>
            <person name="Nakai K."/>
            <person name="Yada T."/>
            <person name="Nakamura Y."/>
            <person name="Ohara O."/>
            <person name="Isogai T."/>
            <person name="Sugano S."/>
        </authorList>
    </citation>
    <scope>NUCLEOTIDE SEQUENCE [LARGE SCALE MRNA]</scope>
    <source>
        <tissue>Hippocampus</tissue>
    </source>
</reference>
<reference key="4">
    <citation type="journal article" date="2006" name="Nature">
        <title>The DNA sequence and biological annotation of human chromosome 1.</title>
        <authorList>
            <person name="Gregory S.G."/>
            <person name="Barlow K.F."/>
            <person name="McLay K.E."/>
            <person name="Kaul R."/>
            <person name="Swarbreck D."/>
            <person name="Dunham A."/>
            <person name="Scott C.E."/>
            <person name="Howe K.L."/>
            <person name="Woodfine K."/>
            <person name="Spencer C.C.A."/>
            <person name="Jones M.C."/>
            <person name="Gillson C."/>
            <person name="Searle S."/>
            <person name="Zhou Y."/>
            <person name="Kokocinski F."/>
            <person name="McDonald L."/>
            <person name="Evans R."/>
            <person name="Phillips K."/>
            <person name="Atkinson A."/>
            <person name="Cooper R."/>
            <person name="Jones C."/>
            <person name="Hall R.E."/>
            <person name="Andrews T.D."/>
            <person name="Lloyd C."/>
            <person name="Ainscough R."/>
            <person name="Almeida J.P."/>
            <person name="Ambrose K.D."/>
            <person name="Anderson F."/>
            <person name="Andrew R.W."/>
            <person name="Ashwell R.I.S."/>
            <person name="Aubin K."/>
            <person name="Babbage A.K."/>
            <person name="Bagguley C.L."/>
            <person name="Bailey J."/>
            <person name="Beasley H."/>
            <person name="Bethel G."/>
            <person name="Bird C.P."/>
            <person name="Bray-Allen S."/>
            <person name="Brown J.Y."/>
            <person name="Brown A.J."/>
            <person name="Buckley D."/>
            <person name="Burton J."/>
            <person name="Bye J."/>
            <person name="Carder C."/>
            <person name="Chapman J.C."/>
            <person name="Clark S.Y."/>
            <person name="Clarke G."/>
            <person name="Clee C."/>
            <person name="Cobley V."/>
            <person name="Collier R.E."/>
            <person name="Corby N."/>
            <person name="Coville G.J."/>
            <person name="Davies J."/>
            <person name="Deadman R."/>
            <person name="Dunn M."/>
            <person name="Earthrowl M."/>
            <person name="Ellington A.G."/>
            <person name="Errington H."/>
            <person name="Frankish A."/>
            <person name="Frankland J."/>
            <person name="French L."/>
            <person name="Garner P."/>
            <person name="Garnett J."/>
            <person name="Gay L."/>
            <person name="Ghori M.R.J."/>
            <person name="Gibson R."/>
            <person name="Gilby L.M."/>
            <person name="Gillett W."/>
            <person name="Glithero R.J."/>
            <person name="Grafham D.V."/>
            <person name="Griffiths C."/>
            <person name="Griffiths-Jones S."/>
            <person name="Grocock R."/>
            <person name="Hammond S."/>
            <person name="Harrison E.S.I."/>
            <person name="Hart E."/>
            <person name="Haugen E."/>
            <person name="Heath P.D."/>
            <person name="Holmes S."/>
            <person name="Holt K."/>
            <person name="Howden P.J."/>
            <person name="Hunt A.R."/>
            <person name="Hunt S.E."/>
            <person name="Hunter G."/>
            <person name="Isherwood J."/>
            <person name="James R."/>
            <person name="Johnson C."/>
            <person name="Johnson D."/>
            <person name="Joy A."/>
            <person name="Kay M."/>
            <person name="Kershaw J.K."/>
            <person name="Kibukawa M."/>
            <person name="Kimberley A.M."/>
            <person name="King A."/>
            <person name="Knights A.J."/>
            <person name="Lad H."/>
            <person name="Laird G."/>
            <person name="Lawlor S."/>
            <person name="Leongamornlert D.A."/>
            <person name="Lloyd D.M."/>
            <person name="Loveland J."/>
            <person name="Lovell J."/>
            <person name="Lush M.J."/>
            <person name="Lyne R."/>
            <person name="Martin S."/>
            <person name="Mashreghi-Mohammadi M."/>
            <person name="Matthews L."/>
            <person name="Matthews N.S.W."/>
            <person name="McLaren S."/>
            <person name="Milne S."/>
            <person name="Mistry S."/>
            <person name="Moore M.J.F."/>
            <person name="Nickerson T."/>
            <person name="O'Dell C.N."/>
            <person name="Oliver K."/>
            <person name="Palmeiri A."/>
            <person name="Palmer S.A."/>
            <person name="Parker A."/>
            <person name="Patel D."/>
            <person name="Pearce A.V."/>
            <person name="Peck A.I."/>
            <person name="Pelan S."/>
            <person name="Phelps K."/>
            <person name="Phillimore B.J."/>
            <person name="Plumb R."/>
            <person name="Rajan J."/>
            <person name="Raymond C."/>
            <person name="Rouse G."/>
            <person name="Saenphimmachak C."/>
            <person name="Sehra H.K."/>
            <person name="Sheridan E."/>
            <person name="Shownkeen R."/>
            <person name="Sims S."/>
            <person name="Skuce C.D."/>
            <person name="Smith M."/>
            <person name="Steward C."/>
            <person name="Subramanian S."/>
            <person name="Sycamore N."/>
            <person name="Tracey A."/>
            <person name="Tromans A."/>
            <person name="Van Helmond Z."/>
            <person name="Wall M."/>
            <person name="Wallis J.M."/>
            <person name="White S."/>
            <person name="Whitehead S.L."/>
            <person name="Wilkinson J.E."/>
            <person name="Willey D.L."/>
            <person name="Williams H."/>
            <person name="Wilming L."/>
            <person name="Wray P.W."/>
            <person name="Wu Z."/>
            <person name="Coulson A."/>
            <person name="Vaudin M."/>
            <person name="Sulston J.E."/>
            <person name="Durbin R.M."/>
            <person name="Hubbard T."/>
            <person name="Wooster R."/>
            <person name="Dunham I."/>
            <person name="Carter N.P."/>
            <person name="McVean G."/>
            <person name="Ross M.T."/>
            <person name="Harrow J."/>
            <person name="Olson M.V."/>
            <person name="Beck S."/>
            <person name="Rogers J."/>
            <person name="Bentley D.R."/>
        </authorList>
    </citation>
    <scope>NUCLEOTIDE SEQUENCE [LARGE SCALE GENOMIC DNA]</scope>
</reference>
<reference key="5">
    <citation type="submission" date="2005-07" db="EMBL/GenBank/DDBJ databases">
        <authorList>
            <person name="Mural R.J."/>
            <person name="Istrail S."/>
            <person name="Sutton G."/>
            <person name="Florea L."/>
            <person name="Halpern A.L."/>
            <person name="Mobarry C.M."/>
            <person name="Lippert R."/>
            <person name="Walenz B."/>
            <person name="Shatkay H."/>
            <person name="Dew I."/>
            <person name="Miller J.R."/>
            <person name="Flanigan M.J."/>
            <person name="Edwards N.J."/>
            <person name="Bolanos R."/>
            <person name="Fasulo D."/>
            <person name="Halldorsson B.V."/>
            <person name="Hannenhalli S."/>
            <person name="Turner R."/>
            <person name="Yooseph S."/>
            <person name="Lu F."/>
            <person name="Nusskern D.R."/>
            <person name="Shue B.C."/>
            <person name="Zheng X.H."/>
            <person name="Zhong F."/>
            <person name="Delcher A.L."/>
            <person name="Huson D.H."/>
            <person name="Kravitz S.A."/>
            <person name="Mouchard L."/>
            <person name="Reinert K."/>
            <person name="Remington K.A."/>
            <person name="Clark A.G."/>
            <person name="Waterman M.S."/>
            <person name="Eichler E.E."/>
            <person name="Adams M.D."/>
            <person name="Hunkapiller M.W."/>
            <person name="Myers E.W."/>
            <person name="Venter J.C."/>
        </authorList>
    </citation>
    <scope>NUCLEOTIDE SEQUENCE [LARGE SCALE GENOMIC DNA]</scope>
</reference>
<reference key="6">
    <citation type="journal article" date="2004" name="Genome Res.">
        <title>The status, quality, and expansion of the NIH full-length cDNA project: the Mammalian Gene Collection (MGC).</title>
        <authorList>
            <consortium name="The MGC Project Team"/>
        </authorList>
    </citation>
    <scope>NUCLEOTIDE SEQUENCE [LARGE SCALE MRNA]</scope>
    <source>
        <tissue>Brain</tissue>
        <tissue>Eye</tissue>
    </source>
</reference>
<reference key="7">
    <citation type="journal article" date="2005" name="BMC Genomics">
        <title>FAM20: an evolutionarily conserved family of secreted proteins expressed in hematopoietic cells.</title>
        <authorList>
            <person name="Nalbant D."/>
            <person name="Youn H."/>
            <person name="Nalbant S.I."/>
            <person name="Sharma S."/>
            <person name="Cobos E."/>
            <person name="Beale E.G."/>
            <person name="Du Y."/>
            <person name="Williams S.C."/>
        </authorList>
    </citation>
    <scope>TISSUE SPECIFICITY</scope>
</reference>
<reference key="8">
    <citation type="journal article" date="2008" name="J. Biol. Chem.">
        <title>2-o-phosphorylation of xylose and 6-O-sulfation of galactose in the protein linkage region of glycosaminoglycans influence the glucuronyltransferase-I activity involved in the linkage region synthesis.</title>
        <authorList>
            <person name="Tone Y."/>
            <person name="Pedersen L.C."/>
            <person name="Yamamoto T."/>
            <person name="Izumikawa T."/>
            <person name="Kitagawa H."/>
            <person name="Nishihara J."/>
            <person name="Tamura J."/>
            <person name="Negishi M."/>
            <person name="Sugahara K."/>
        </authorList>
    </citation>
    <scope>ROLE OF XYLOSE 2-O-PHOSPHORYLATION IN GAG BIOSYNTHESIS</scope>
</reference>
<reference key="9">
    <citation type="journal article" date="2014" name="J. Biol. Chem.">
        <title>Identification of phosphatase that dephosphorylates xylose in the glycosaminoglycan-protein linkage region of proteoglycans.</title>
        <authorList>
            <person name="Koike T."/>
            <person name="Izumikawa T."/>
            <person name="Sato B."/>
            <person name="Kitagawa H."/>
        </authorList>
    </citation>
    <scope>FUNCTION</scope>
    <scope>TISSUE SPECIFICITY</scope>
</reference>
<accession>O75063</accession>
<accession>Q5W0C3</accession>
<accession>Q5W0C4</accession>
<evidence type="ECO:0000250" key="1">
    <source>
        <dbReference type="UniProtKB" id="Q8IXL6"/>
    </source>
</evidence>
<evidence type="ECO:0000250" key="2">
    <source>
        <dbReference type="UniProtKB" id="Q9XTW2"/>
    </source>
</evidence>
<evidence type="ECO:0000255" key="3"/>
<evidence type="ECO:0000269" key="4">
    <source>
    </source>
</evidence>
<evidence type="ECO:0000269" key="5">
    <source>
    </source>
</evidence>
<evidence type="ECO:0000269" key="6">
    <source>
    </source>
</evidence>
<evidence type="ECO:0000303" key="7">
    <source>
    </source>
</evidence>
<evidence type="ECO:0000305" key="8"/>
<evidence type="ECO:0000312" key="9">
    <source>
        <dbReference type="HGNC" id="HGNC:23017"/>
    </source>
</evidence>
<gene>
    <name evidence="9" type="primary">FAM20B</name>
    <name evidence="7" type="synonym">KIAA0475</name>
</gene>
<keyword id="KW-0067">ATP-binding</keyword>
<keyword id="KW-1015">Disulfide bond</keyword>
<keyword id="KW-0325">Glycoprotein</keyword>
<keyword id="KW-0333">Golgi apparatus</keyword>
<keyword id="KW-0418">Kinase</keyword>
<keyword id="KW-0464">Manganese</keyword>
<keyword id="KW-0472">Membrane</keyword>
<keyword id="KW-0479">Metal-binding</keyword>
<keyword id="KW-0547">Nucleotide-binding</keyword>
<keyword id="KW-1267">Proteomics identification</keyword>
<keyword id="KW-1185">Reference proteome</keyword>
<keyword id="KW-0735">Signal-anchor</keyword>
<keyword id="KW-0808">Transferase</keyword>
<keyword id="KW-0812">Transmembrane</keyword>
<keyword id="KW-1133">Transmembrane helix</keyword>
<dbReference type="EC" id="2.7.1.-" evidence="5"/>
<dbReference type="EMBL" id="AB480690">
    <property type="protein sequence ID" value="BAH79819.1"/>
    <property type="molecule type" value="mRNA"/>
</dbReference>
<dbReference type="EMBL" id="AB007944">
    <property type="protein sequence ID" value="BAA32320.2"/>
    <property type="status" value="ALT_INIT"/>
    <property type="molecule type" value="mRNA"/>
</dbReference>
<dbReference type="EMBL" id="AK289989">
    <property type="protein sequence ID" value="BAF82678.1"/>
    <property type="molecule type" value="mRNA"/>
</dbReference>
<dbReference type="EMBL" id="AL139132">
    <property type="status" value="NOT_ANNOTATED_CDS"/>
    <property type="molecule type" value="Genomic_DNA"/>
</dbReference>
<dbReference type="EMBL" id="CH471067">
    <property type="protein sequence ID" value="EAW91034.1"/>
    <property type="molecule type" value="Genomic_DNA"/>
</dbReference>
<dbReference type="EMBL" id="BC046441">
    <property type="protein sequence ID" value="AAH46441.1"/>
    <property type="molecule type" value="mRNA"/>
</dbReference>
<dbReference type="EMBL" id="BC051794">
    <property type="protein sequence ID" value="AAH51794.1"/>
    <property type="molecule type" value="mRNA"/>
</dbReference>
<dbReference type="CCDS" id="CCDS1328.1"/>
<dbReference type="RefSeq" id="NP_001311239.1">
    <property type="nucleotide sequence ID" value="NM_001324310.2"/>
</dbReference>
<dbReference type="RefSeq" id="NP_001311240.1">
    <property type="nucleotide sequence ID" value="NM_001324311.2"/>
</dbReference>
<dbReference type="RefSeq" id="NP_055679.1">
    <property type="nucleotide sequence ID" value="NM_014864.4"/>
</dbReference>
<dbReference type="SMR" id="O75063"/>
<dbReference type="BioGRID" id="115245">
    <property type="interactions" value="85"/>
</dbReference>
<dbReference type="FunCoup" id="O75063">
    <property type="interactions" value="2628"/>
</dbReference>
<dbReference type="IntAct" id="O75063">
    <property type="interactions" value="54"/>
</dbReference>
<dbReference type="STRING" id="9606.ENSP00000263733"/>
<dbReference type="GlyConnect" id="1275">
    <property type="glycosylation" value="3 N-Linked glycans (1 site)"/>
</dbReference>
<dbReference type="GlyCosmos" id="O75063">
    <property type="glycosylation" value="1 site, 3 glycans"/>
</dbReference>
<dbReference type="GlyGen" id="O75063">
    <property type="glycosylation" value="2 sites, 4 N-linked glycans (1 site)"/>
</dbReference>
<dbReference type="iPTMnet" id="O75063"/>
<dbReference type="PhosphoSitePlus" id="O75063"/>
<dbReference type="BioMuta" id="FAM20B"/>
<dbReference type="jPOST" id="O75063"/>
<dbReference type="MassIVE" id="O75063"/>
<dbReference type="PaxDb" id="9606-ENSP00000263733"/>
<dbReference type="PeptideAtlas" id="O75063"/>
<dbReference type="ProteomicsDB" id="49734"/>
<dbReference type="Pumba" id="O75063"/>
<dbReference type="Antibodypedia" id="34415">
    <property type="antibodies" value="20 antibodies from 11 providers"/>
</dbReference>
<dbReference type="DNASU" id="9917"/>
<dbReference type="Ensembl" id="ENST00000263733.5">
    <property type="protein sequence ID" value="ENSP00000263733.4"/>
    <property type="gene ID" value="ENSG00000116199.12"/>
</dbReference>
<dbReference type="GeneID" id="9917"/>
<dbReference type="KEGG" id="hsa:9917"/>
<dbReference type="MANE-Select" id="ENST00000263733.5">
    <property type="protein sequence ID" value="ENSP00000263733.4"/>
    <property type="RefSeq nucleotide sequence ID" value="NM_014864.4"/>
    <property type="RefSeq protein sequence ID" value="NP_055679.1"/>
</dbReference>
<dbReference type="UCSC" id="uc001gmc.4">
    <property type="organism name" value="human"/>
</dbReference>
<dbReference type="AGR" id="HGNC:23017"/>
<dbReference type="CTD" id="9917"/>
<dbReference type="DisGeNET" id="9917"/>
<dbReference type="GeneCards" id="FAM20B"/>
<dbReference type="HGNC" id="HGNC:23017">
    <property type="gene designation" value="FAM20B"/>
</dbReference>
<dbReference type="HPA" id="ENSG00000116199">
    <property type="expression patterns" value="Low tissue specificity"/>
</dbReference>
<dbReference type="MalaCards" id="FAM20B"/>
<dbReference type="MIM" id="611063">
    <property type="type" value="gene"/>
</dbReference>
<dbReference type="neXtProt" id="NX_O75063"/>
<dbReference type="OpenTargets" id="ENSG00000116199"/>
<dbReference type="PharmGKB" id="PA134930918"/>
<dbReference type="VEuPathDB" id="HostDB:ENSG00000116199"/>
<dbReference type="eggNOG" id="KOG3829">
    <property type="taxonomic scope" value="Eukaryota"/>
</dbReference>
<dbReference type="GeneTree" id="ENSGT00950000182951"/>
<dbReference type="HOGENOM" id="CLU_028926_1_1_1"/>
<dbReference type="InParanoid" id="O75063"/>
<dbReference type="OMA" id="AVWEDDM"/>
<dbReference type="OrthoDB" id="8583677at2759"/>
<dbReference type="PAN-GO" id="O75063">
    <property type="GO annotations" value="2 GO annotations based on evolutionary models"/>
</dbReference>
<dbReference type="PhylomeDB" id="O75063"/>
<dbReference type="TreeFam" id="TF313276"/>
<dbReference type="PathwayCommons" id="O75063"/>
<dbReference type="SignaLink" id="O75063"/>
<dbReference type="BioGRID-ORCS" id="9917">
    <property type="hits" value="21 hits in 1162 CRISPR screens"/>
</dbReference>
<dbReference type="ChiTaRS" id="FAM20B">
    <property type="organism name" value="human"/>
</dbReference>
<dbReference type="GeneWiki" id="FAM20B"/>
<dbReference type="GenomeRNAi" id="9917"/>
<dbReference type="Pharos" id="O75063">
    <property type="development level" value="Tdark"/>
</dbReference>
<dbReference type="PRO" id="PR:O75063"/>
<dbReference type="Proteomes" id="UP000005640">
    <property type="component" value="Chromosome 1"/>
</dbReference>
<dbReference type="RNAct" id="O75063">
    <property type="molecule type" value="protein"/>
</dbReference>
<dbReference type="Bgee" id="ENSG00000116199">
    <property type="expression patterns" value="Expressed in lateral nuclear group of thalamus and 216 other cell types or tissues"/>
</dbReference>
<dbReference type="ExpressionAtlas" id="O75063">
    <property type="expression patterns" value="baseline and differential"/>
</dbReference>
<dbReference type="GO" id="GO:0005794">
    <property type="term" value="C:Golgi apparatus"/>
    <property type="evidence" value="ECO:0000314"/>
    <property type="project" value="UniProtKB"/>
</dbReference>
<dbReference type="GO" id="GO:0000139">
    <property type="term" value="C:Golgi membrane"/>
    <property type="evidence" value="ECO:0007669"/>
    <property type="project" value="UniProtKB-SubCell"/>
</dbReference>
<dbReference type="GO" id="GO:0005654">
    <property type="term" value="C:nucleoplasm"/>
    <property type="evidence" value="ECO:0000314"/>
    <property type="project" value="HPA"/>
</dbReference>
<dbReference type="GO" id="GO:0005524">
    <property type="term" value="F:ATP binding"/>
    <property type="evidence" value="ECO:0007669"/>
    <property type="project" value="UniProtKB-KW"/>
</dbReference>
<dbReference type="GO" id="GO:0016301">
    <property type="term" value="F:kinase activity"/>
    <property type="evidence" value="ECO:0007669"/>
    <property type="project" value="UniProtKB-KW"/>
</dbReference>
<dbReference type="GO" id="GO:0046872">
    <property type="term" value="F:metal ion binding"/>
    <property type="evidence" value="ECO:0007669"/>
    <property type="project" value="UniProtKB-KW"/>
</dbReference>
<dbReference type="GO" id="GO:0016773">
    <property type="term" value="F:phosphotransferase activity, alcohol group as acceptor"/>
    <property type="evidence" value="ECO:0000314"/>
    <property type="project" value="UniProtKB"/>
</dbReference>
<dbReference type="GO" id="GO:0030166">
    <property type="term" value="P:proteoglycan biosynthetic process"/>
    <property type="evidence" value="ECO:0000318"/>
    <property type="project" value="GO_Central"/>
</dbReference>
<dbReference type="CDD" id="cd10470">
    <property type="entry name" value="FAM20B_C"/>
    <property type="match status" value="1"/>
</dbReference>
<dbReference type="InterPro" id="IPR024869">
    <property type="entry name" value="FAM20"/>
</dbReference>
<dbReference type="InterPro" id="IPR009581">
    <property type="entry name" value="FAM20_C"/>
</dbReference>
<dbReference type="PANTHER" id="PTHR12450">
    <property type="entry name" value="DENTIN MATRIX PROTEIN 4 PROTEIN FAM20"/>
    <property type="match status" value="1"/>
</dbReference>
<dbReference type="PANTHER" id="PTHR12450:SF14">
    <property type="entry name" value="GLYCOSAMINOGLYCAN XYLOSYLKINASE"/>
    <property type="match status" value="1"/>
</dbReference>
<dbReference type="Pfam" id="PF06702">
    <property type="entry name" value="Fam20C"/>
    <property type="match status" value="1"/>
</dbReference>
<protein>
    <recommendedName>
        <fullName>Glycosaminoglycan xylosylkinase</fullName>
        <ecNumber evidence="5">2.7.1.-</ecNumber>
    </recommendedName>
    <alternativeName>
        <fullName>Xylose kinase</fullName>
    </alternativeName>
</protein>
<name>XYLK_HUMAN</name>
<proteinExistence type="evidence at protein level"/>